<sequence>MAGLSHPSVFGRATHAVVRAPPESLCRHALRRSQGEEVDFARAERQHQLYVGVLGSKLGLQVVQLPADESLPDCVFVEDVAVVCEETALITRPGAPSRRKEVDMMKEALEKLQLNIVEMKDENATLDGGDVLFTGREFFVGLSKRTNQRGAEILADTFKDYAVSTVPVADSLHLKSFCSMAGPNLIAIGSSESAQKALKIMQQMSDHRYDKLTVPDDMAANCIYLNIPSKGHVLLHRTPEEYPESAKVYEKLKDHLLIPVSNSEMEKVDGLLTCCSVFINKKTDS</sequence>
<feature type="initiator methionine" description="Removed" evidence="5">
    <location>
        <position position="1"/>
    </location>
</feature>
<feature type="chain" id="PRO_0000171120" description="N(G),N(G)-dimethylarginine dimethylaminohydrolase 1">
    <location>
        <begin position="2"/>
        <end position="285"/>
    </location>
</feature>
<feature type="active site" description="Proton donor" evidence="1">
    <location>
        <position position="173"/>
    </location>
</feature>
<feature type="active site" description="Nucleophile" evidence="1">
    <location>
        <position position="274"/>
    </location>
</feature>
<feature type="binding site" evidence="1">
    <location>
        <position position="30"/>
    </location>
    <ligand>
        <name>substrate</name>
    </ligand>
</feature>
<feature type="binding site" evidence="1">
    <location>
        <position position="73"/>
    </location>
    <ligand>
        <name>substrate</name>
    </ligand>
</feature>
<feature type="binding site" evidence="1">
    <location>
        <position position="78"/>
    </location>
    <ligand>
        <name>substrate</name>
    </ligand>
</feature>
<feature type="binding site" evidence="1">
    <location>
        <position position="79"/>
    </location>
    <ligand>
        <name>substrate</name>
    </ligand>
</feature>
<feature type="binding site" evidence="1">
    <location>
        <position position="98"/>
    </location>
    <ligand>
        <name>substrate</name>
    </ligand>
</feature>
<feature type="binding site" evidence="1">
    <location>
        <position position="145"/>
    </location>
    <ligand>
        <name>substrate</name>
    </ligand>
</feature>
<feature type="binding site" evidence="1">
    <location>
        <position position="268"/>
    </location>
    <ligand>
        <name>substrate</name>
    </ligand>
</feature>
<feature type="binding site" evidence="1">
    <location>
        <position position="274"/>
    </location>
    <ligand>
        <name>Zn(2+)</name>
        <dbReference type="ChEBI" id="CHEBI:29105"/>
    </ligand>
</feature>
<feature type="modified residue" description="N-acetylalanine" evidence="5">
    <location>
        <position position="2"/>
    </location>
</feature>
<feature type="modified residue" description="Phosphoserine" evidence="7">
    <location>
        <position position="33"/>
    </location>
</feature>
<feature type="modified residue" description="S-nitrosocysteine" evidence="3">
    <location>
        <position position="222"/>
    </location>
</feature>
<feature type="modified residue" description="S-nitrosocysteine" evidence="3">
    <location>
        <position position="274"/>
    </location>
</feature>
<protein>
    <recommendedName>
        <fullName>N(G),N(G)-dimethylarginine dimethylaminohydrolase 1</fullName>
        <shortName>DDAH-1</shortName>
        <shortName>Dimethylarginine dimethylaminohydrolase 1</shortName>
        <ecNumber>3.5.3.18</ecNumber>
    </recommendedName>
    <alternativeName>
        <fullName>DDAHI</fullName>
    </alternativeName>
    <alternativeName>
        <fullName>Dimethylargininase-1</fullName>
    </alternativeName>
</protein>
<reference key="1">
    <citation type="journal article" date="1997" name="Biochim. Biophys. Acta">
        <title>Cloning and sequencing of cDNA encoding NG,NG-dimethylarginine dimethylaminohydrolase from rat kidney.</title>
        <authorList>
            <person name="Kimoto M."/>
            <person name="Sasakawa T."/>
            <person name="Tsuji H."/>
            <person name="Miyatake S."/>
            <person name="Oka T."/>
            <person name="Nio N."/>
            <person name="Ogawa T."/>
        </authorList>
    </citation>
    <scope>NUCLEOTIDE SEQUENCE [MRNA]</scope>
    <scope>PARTIAL PROTEIN SEQUENCE</scope>
    <scope>ACETYLATION AT ALA-2</scope>
    <source>
        <strain>Wistar</strain>
        <tissue>Kidney</tissue>
    </source>
</reference>
<reference key="2">
    <citation type="submission" date="2007-04" db="UniProtKB">
        <authorList>
            <person name="Lubec G."/>
            <person name="Afjehi-Sadat L."/>
            <person name="Chen W.-Q."/>
        </authorList>
    </citation>
    <scope>PROTEIN SEQUENCE OF 46-57; 112-136 AND 160-175</scope>
    <scope>IDENTIFICATION BY MASS SPECTROMETRY</scope>
    <source>
        <strain>Sprague-Dawley</strain>
        <tissue>Hippocampus</tissue>
        <tissue>Spinal cord</tissue>
    </source>
</reference>
<reference key="3">
    <citation type="journal article" date="2006" name="Am. J. Physiol.">
        <title>Contribution of whole blood to the control of plasma asymmetrical dimethylarginine.</title>
        <authorList>
            <person name="Billecke S.S."/>
            <person name="Kitzmiller L.A."/>
            <person name="Northrup J.J."/>
            <person name="Whitesall S.E."/>
            <person name="Kimoto M."/>
            <person name="Hinz A.V."/>
            <person name="D'Alecy L.G."/>
        </authorList>
    </citation>
    <scope>FUNCTION</scope>
    <scope>ACTIVITY REGULATION</scope>
    <scope>TISSUE SPECIFICITY</scope>
</reference>
<reference key="4">
    <citation type="journal article" date="2012" name="Nat. Commun.">
        <title>Quantitative maps of protein phosphorylation sites across 14 different rat organs and tissues.</title>
        <authorList>
            <person name="Lundby A."/>
            <person name="Secher A."/>
            <person name="Lage K."/>
            <person name="Nordsborg N.B."/>
            <person name="Dmytriyev A."/>
            <person name="Lundby C."/>
            <person name="Olsen J.V."/>
        </authorList>
    </citation>
    <scope>PHOSPHORYLATION [LARGE SCALE ANALYSIS] AT SER-33</scope>
    <scope>IDENTIFICATION BY MASS SPECTROMETRY [LARGE SCALE ANALYSIS]</scope>
</reference>
<proteinExistence type="evidence at protein level"/>
<keyword id="KW-0007">Acetylation</keyword>
<keyword id="KW-0903">Direct protein sequencing</keyword>
<keyword id="KW-0378">Hydrolase</keyword>
<keyword id="KW-0479">Metal-binding</keyword>
<keyword id="KW-0597">Phosphoprotein</keyword>
<keyword id="KW-1185">Reference proteome</keyword>
<keyword id="KW-0702">S-nitrosylation</keyword>
<keyword id="KW-0862">Zinc</keyword>
<gene>
    <name type="primary">Ddah1</name>
    <name type="synonym">Ddah</name>
</gene>
<comment type="function">
    <text evidence="4">Hydrolyzes N(G),N(G)-dimethyl-L-arginine (ADMA) and N(G)-monomethyl-L-arginine (MMA) which act as inhibitors of NOS. Has therefore a role in the regulation of nitric oxide generation.</text>
</comment>
<comment type="catalytic activity">
    <reaction>
        <text>N(omega),N(omega)-dimethyl-L-arginine + H2O = dimethylamine + L-citrulline</text>
        <dbReference type="Rhea" id="RHEA:17305"/>
        <dbReference type="ChEBI" id="CHEBI:15377"/>
        <dbReference type="ChEBI" id="CHEBI:57743"/>
        <dbReference type="ChEBI" id="CHEBI:58040"/>
        <dbReference type="ChEBI" id="CHEBI:58326"/>
        <dbReference type="EC" id="3.5.3.18"/>
    </reaction>
</comment>
<comment type="catalytic activity">
    <reaction evidence="2">
        <text>N(omega)-methyl-L-arginine + H2O = L-citrulline + methylamine</text>
        <dbReference type="Rhea" id="RHEA:25173"/>
        <dbReference type="ChEBI" id="CHEBI:15377"/>
        <dbReference type="ChEBI" id="CHEBI:57743"/>
        <dbReference type="ChEBI" id="CHEBI:59338"/>
        <dbReference type="ChEBI" id="CHEBI:114953"/>
        <dbReference type="EC" id="3.5.3.18"/>
    </reaction>
</comment>
<comment type="activity regulation">
    <text evidence="4">Inhibited by zinc ions.</text>
</comment>
<comment type="subunit">
    <text evidence="1">Monomer.</text>
</comment>
<comment type="tissue specificity">
    <text evidence="4">Detected in red blood cells (at protein level). Widely distributed, high amounts found in kidney, brain, aorta and pancreas.</text>
</comment>
<comment type="similarity">
    <text evidence="6">Belongs to the DDAH family.</text>
</comment>
<evidence type="ECO:0000250" key="1"/>
<evidence type="ECO:0000250" key="2">
    <source>
        <dbReference type="UniProtKB" id="O94760"/>
    </source>
</evidence>
<evidence type="ECO:0000250" key="3">
    <source>
        <dbReference type="UniProtKB" id="P56965"/>
    </source>
</evidence>
<evidence type="ECO:0000269" key="4">
    <source>
    </source>
</evidence>
<evidence type="ECO:0000269" key="5">
    <source>
    </source>
</evidence>
<evidence type="ECO:0000305" key="6"/>
<evidence type="ECO:0007744" key="7">
    <source>
    </source>
</evidence>
<name>DDAH1_RAT</name>
<accession>O08557</accession>
<dbReference type="EC" id="3.5.3.18"/>
<dbReference type="EMBL" id="D86041">
    <property type="protein sequence ID" value="BAA18993.1"/>
    <property type="molecule type" value="mRNA"/>
</dbReference>
<dbReference type="RefSeq" id="NP_071633.1">
    <property type="nucleotide sequence ID" value="NM_022297.3"/>
</dbReference>
<dbReference type="SMR" id="O08557"/>
<dbReference type="FunCoup" id="O08557">
    <property type="interactions" value="658"/>
</dbReference>
<dbReference type="IntAct" id="O08557">
    <property type="interactions" value="1"/>
</dbReference>
<dbReference type="STRING" id="10116.ENSRNOP00000044971"/>
<dbReference type="BindingDB" id="O08557"/>
<dbReference type="ChEMBL" id="CHEMBL4196"/>
<dbReference type="iPTMnet" id="O08557"/>
<dbReference type="PhosphoSitePlus" id="O08557"/>
<dbReference type="SwissPalm" id="O08557"/>
<dbReference type="PaxDb" id="10116-ENSRNOP00000044971"/>
<dbReference type="Ensembl" id="ENSRNOT00000045016.5">
    <property type="protein sequence ID" value="ENSRNOP00000044971.3"/>
    <property type="gene ID" value="ENSRNOG00000014613.8"/>
</dbReference>
<dbReference type="GeneID" id="64157"/>
<dbReference type="KEGG" id="rno:64157"/>
<dbReference type="AGR" id="RGD:70968"/>
<dbReference type="CTD" id="23576"/>
<dbReference type="RGD" id="70968">
    <property type="gene designation" value="Ddah1"/>
</dbReference>
<dbReference type="eggNOG" id="ENOG502QWPA">
    <property type="taxonomic scope" value="Eukaryota"/>
</dbReference>
<dbReference type="GeneTree" id="ENSGT00940000157892"/>
<dbReference type="HOGENOM" id="CLU_067923_0_0_1"/>
<dbReference type="InParanoid" id="O08557"/>
<dbReference type="OMA" id="GRCSHAV"/>
<dbReference type="OrthoDB" id="10016839at2759"/>
<dbReference type="PhylomeDB" id="O08557"/>
<dbReference type="BRENDA" id="3.5.3.18">
    <property type="organism ID" value="5301"/>
</dbReference>
<dbReference type="Reactome" id="R-RNO-203615">
    <property type="pathway name" value="eNOS activation"/>
</dbReference>
<dbReference type="SABIO-RK" id="O08557"/>
<dbReference type="PRO" id="PR:O08557"/>
<dbReference type="Proteomes" id="UP000002494">
    <property type="component" value="Chromosome 2"/>
</dbReference>
<dbReference type="Bgee" id="ENSRNOG00000014613">
    <property type="expression patterns" value="Expressed in adult mammalian kidney and 19 other cell types or tissues"/>
</dbReference>
<dbReference type="GO" id="GO:0016597">
    <property type="term" value="F:amino acid binding"/>
    <property type="evidence" value="ECO:0000314"/>
    <property type="project" value="RGD"/>
</dbReference>
<dbReference type="GO" id="GO:0016403">
    <property type="term" value="F:dimethylargininase activity"/>
    <property type="evidence" value="ECO:0000314"/>
    <property type="project" value="RGD"/>
</dbReference>
<dbReference type="GO" id="GO:0046872">
    <property type="term" value="F:metal ion binding"/>
    <property type="evidence" value="ECO:0007669"/>
    <property type="project" value="UniProtKB-KW"/>
</dbReference>
<dbReference type="GO" id="GO:0006527">
    <property type="term" value="P:arginine catabolic process"/>
    <property type="evidence" value="ECO:0000266"/>
    <property type="project" value="RGD"/>
</dbReference>
<dbReference type="GO" id="GO:0006525">
    <property type="term" value="P:arginine metabolic process"/>
    <property type="evidence" value="ECO:0000314"/>
    <property type="project" value="RGD"/>
</dbReference>
<dbReference type="GO" id="GO:0000052">
    <property type="term" value="P:citrulline metabolic process"/>
    <property type="evidence" value="ECO:0000250"/>
    <property type="project" value="UniProtKB"/>
</dbReference>
<dbReference type="GO" id="GO:0008285">
    <property type="term" value="P:negative regulation of cell population proliferation"/>
    <property type="evidence" value="ECO:0000266"/>
    <property type="project" value="RGD"/>
</dbReference>
<dbReference type="GO" id="GO:1900038">
    <property type="term" value="P:negative regulation of cellular response to hypoxia"/>
    <property type="evidence" value="ECO:0000266"/>
    <property type="project" value="RGD"/>
</dbReference>
<dbReference type="GO" id="GO:0043116">
    <property type="term" value="P:negative regulation of vascular permeability"/>
    <property type="evidence" value="ECO:0000266"/>
    <property type="project" value="RGD"/>
</dbReference>
<dbReference type="GO" id="GO:0045766">
    <property type="term" value="P:positive regulation of angiogenesis"/>
    <property type="evidence" value="ECO:0000315"/>
    <property type="project" value="RGD"/>
</dbReference>
<dbReference type="GO" id="GO:0045429">
    <property type="term" value="P:positive regulation of nitric oxide biosynthetic process"/>
    <property type="evidence" value="ECO:0000315"/>
    <property type="project" value="RGD"/>
</dbReference>
<dbReference type="GO" id="GO:0003073">
    <property type="term" value="P:regulation of systemic arterial blood pressure"/>
    <property type="evidence" value="ECO:0000266"/>
    <property type="project" value="RGD"/>
</dbReference>
<dbReference type="FunFam" id="3.75.10.10:FF:000004">
    <property type="entry name" value="N(G),N(G)-dimethylarginine dimethylaminohydrolase 1"/>
    <property type="match status" value="1"/>
</dbReference>
<dbReference type="Gene3D" id="3.75.10.10">
    <property type="entry name" value="L-arginine/glycine Amidinotransferase, Chain A"/>
    <property type="match status" value="1"/>
</dbReference>
<dbReference type="InterPro" id="IPR033199">
    <property type="entry name" value="DDAH-like"/>
</dbReference>
<dbReference type="PANTHER" id="PTHR12737">
    <property type="entry name" value="DIMETHYLARGININE DIMETHYLAMINOHYDROLASE"/>
    <property type="match status" value="1"/>
</dbReference>
<dbReference type="PANTHER" id="PTHR12737:SF17">
    <property type="entry name" value="N(G),N(G)-DIMETHYLARGININE DIMETHYLAMINOHYDROLASE 1"/>
    <property type="match status" value="1"/>
</dbReference>
<dbReference type="Pfam" id="PF19420">
    <property type="entry name" value="DDAH_eukar"/>
    <property type="match status" value="1"/>
</dbReference>
<dbReference type="SUPFAM" id="SSF55909">
    <property type="entry name" value="Pentein"/>
    <property type="match status" value="1"/>
</dbReference>
<organism>
    <name type="scientific">Rattus norvegicus</name>
    <name type="common">Rat</name>
    <dbReference type="NCBI Taxonomy" id="10116"/>
    <lineage>
        <taxon>Eukaryota</taxon>
        <taxon>Metazoa</taxon>
        <taxon>Chordata</taxon>
        <taxon>Craniata</taxon>
        <taxon>Vertebrata</taxon>
        <taxon>Euteleostomi</taxon>
        <taxon>Mammalia</taxon>
        <taxon>Eutheria</taxon>
        <taxon>Euarchontoglires</taxon>
        <taxon>Glires</taxon>
        <taxon>Rodentia</taxon>
        <taxon>Myomorpha</taxon>
        <taxon>Muroidea</taxon>
        <taxon>Muridae</taxon>
        <taxon>Murinae</taxon>
        <taxon>Rattus</taxon>
    </lineage>
</organism>